<name>NXF1_DROME</name>
<protein>
    <recommendedName>
        <fullName evidence="16">Nuclear RNA export factor 1</fullName>
    </recommendedName>
    <alternativeName>
        <fullName evidence="14">Protein small bristles</fullName>
    </alternativeName>
    <alternativeName>
        <fullName evidence="17">Protein tip-associating</fullName>
    </alternativeName>
</protein>
<reference key="1">
    <citation type="journal article" date="2001" name="RNA">
        <title>Small bristles, the Drosophila ortholog of NXF-1, is essential for mRNA export throughout development.</title>
        <authorList>
            <person name="Wilkie G.S."/>
            <person name="Zimyanin V."/>
            <person name="Kirby R."/>
            <person name="Korey C."/>
            <person name="Francis-Lang H."/>
            <person name="Van Vactor D."/>
            <person name="Davis I."/>
        </authorList>
    </citation>
    <scope>NUCLEOTIDE SEQUENCE [MRNA]</scope>
    <scope>FUNCTION</scope>
</reference>
<reference key="2">
    <citation type="journal article" date="2001" name="Genetics">
        <title>small bristles is required for the morphogenesis of multiple tissues during Drosophila development.</title>
        <authorList>
            <person name="Korey C."/>
            <person name="Wilkie G."/>
            <person name="Davis I."/>
            <person name="Van Vactor D."/>
        </authorList>
    </citation>
    <scope>NUCLEOTIDE SEQUENCE</scope>
    <scope>FUNCTION</scope>
    <scope>DEVELOPMENTAL STAGE</scope>
    <source>
        <strain>Oregon-R</strain>
    </source>
</reference>
<reference key="3">
    <citation type="journal article" date="2001" name="RNA">
        <title>NXF1/p15 heterodimers are essential for mRNA nuclear export in Drosophila.</title>
        <authorList>
            <person name="Herold A."/>
            <person name="Klymenko T."/>
            <person name="Izaurralde E."/>
        </authorList>
    </citation>
    <scope>NUCLEOTIDE SEQUENCE</scope>
    <scope>FUNCTION</scope>
    <scope>INTERACTION WITH NXT1</scope>
    <source>
        <tissue>Embryo</tissue>
    </source>
</reference>
<reference key="4">
    <citation type="journal article" date="2000" name="Science">
        <title>The genome sequence of Drosophila melanogaster.</title>
        <authorList>
            <person name="Adams M.D."/>
            <person name="Celniker S.E."/>
            <person name="Holt R.A."/>
            <person name="Evans C.A."/>
            <person name="Gocayne J.D."/>
            <person name="Amanatides P.G."/>
            <person name="Scherer S.E."/>
            <person name="Li P.W."/>
            <person name="Hoskins R.A."/>
            <person name="Galle R.F."/>
            <person name="George R.A."/>
            <person name="Lewis S.E."/>
            <person name="Richards S."/>
            <person name="Ashburner M."/>
            <person name="Henderson S.N."/>
            <person name="Sutton G.G."/>
            <person name="Wortman J.R."/>
            <person name="Yandell M.D."/>
            <person name="Zhang Q."/>
            <person name="Chen L.X."/>
            <person name="Brandon R.C."/>
            <person name="Rogers Y.-H.C."/>
            <person name="Blazej R.G."/>
            <person name="Champe M."/>
            <person name="Pfeiffer B.D."/>
            <person name="Wan K.H."/>
            <person name="Doyle C."/>
            <person name="Baxter E.G."/>
            <person name="Helt G."/>
            <person name="Nelson C.R."/>
            <person name="Miklos G.L.G."/>
            <person name="Abril J.F."/>
            <person name="Agbayani A."/>
            <person name="An H.-J."/>
            <person name="Andrews-Pfannkoch C."/>
            <person name="Baldwin D."/>
            <person name="Ballew R.M."/>
            <person name="Basu A."/>
            <person name="Baxendale J."/>
            <person name="Bayraktaroglu L."/>
            <person name="Beasley E.M."/>
            <person name="Beeson K.Y."/>
            <person name="Benos P.V."/>
            <person name="Berman B.P."/>
            <person name="Bhandari D."/>
            <person name="Bolshakov S."/>
            <person name="Borkova D."/>
            <person name="Botchan M.R."/>
            <person name="Bouck J."/>
            <person name="Brokstein P."/>
            <person name="Brottier P."/>
            <person name="Burtis K.C."/>
            <person name="Busam D.A."/>
            <person name="Butler H."/>
            <person name="Cadieu E."/>
            <person name="Center A."/>
            <person name="Chandra I."/>
            <person name="Cherry J.M."/>
            <person name="Cawley S."/>
            <person name="Dahlke C."/>
            <person name="Davenport L.B."/>
            <person name="Davies P."/>
            <person name="de Pablos B."/>
            <person name="Delcher A."/>
            <person name="Deng Z."/>
            <person name="Mays A.D."/>
            <person name="Dew I."/>
            <person name="Dietz S.M."/>
            <person name="Dodson K."/>
            <person name="Doup L.E."/>
            <person name="Downes M."/>
            <person name="Dugan-Rocha S."/>
            <person name="Dunkov B.C."/>
            <person name="Dunn P."/>
            <person name="Durbin K.J."/>
            <person name="Evangelista C.C."/>
            <person name="Ferraz C."/>
            <person name="Ferriera S."/>
            <person name="Fleischmann W."/>
            <person name="Fosler C."/>
            <person name="Gabrielian A.E."/>
            <person name="Garg N.S."/>
            <person name="Gelbart W.M."/>
            <person name="Glasser K."/>
            <person name="Glodek A."/>
            <person name="Gong F."/>
            <person name="Gorrell J.H."/>
            <person name="Gu Z."/>
            <person name="Guan P."/>
            <person name="Harris M."/>
            <person name="Harris N.L."/>
            <person name="Harvey D.A."/>
            <person name="Heiman T.J."/>
            <person name="Hernandez J.R."/>
            <person name="Houck J."/>
            <person name="Hostin D."/>
            <person name="Houston K.A."/>
            <person name="Howland T.J."/>
            <person name="Wei M.-H."/>
            <person name="Ibegwam C."/>
            <person name="Jalali M."/>
            <person name="Kalush F."/>
            <person name="Karpen G.H."/>
            <person name="Ke Z."/>
            <person name="Kennison J.A."/>
            <person name="Ketchum K.A."/>
            <person name="Kimmel B.E."/>
            <person name="Kodira C.D."/>
            <person name="Kraft C.L."/>
            <person name="Kravitz S."/>
            <person name="Kulp D."/>
            <person name="Lai Z."/>
            <person name="Lasko P."/>
            <person name="Lei Y."/>
            <person name="Levitsky A.A."/>
            <person name="Li J.H."/>
            <person name="Li Z."/>
            <person name="Liang Y."/>
            <person name="Lin X."/>
            <person name="Liu X."/>
            <person name="Mattei B."/>
            <person name="McIntosh T.C."/>
            <person name="McLeod M.P."/>
            <person name="McPherson D."/>
            <person name="Merkulov G."/>
            <person name="Milshina N.V."/>
            <person name="Mobarry C."/>
            <person name="Morris J."/>
            <person name="Moshrefi A."/>
            <person name="Mount S.M."/>
            <person name="Moy M."/>
            <person name="Murphy B."/>
            <person name="Murphy L."/>
            <person name="Muzny D.M."/>
            <person name="Nelson D.L."/>
            <person name="Nelson D.R."/>
            <person name="Nelson K.A."/>
            <person name="Nixon K."/>
            <person name="Nusskern D.R."/>
            <person name="Pacleb J.M."/>
            <person name="Palazzolo M."/>
            <person name="Pittman G.S."/>
            <person name="Pan S."/>
            <person name="Pollard J."/>
            <person name="Puri V."/>
            <person name="Reese M.G."/>
            <person name="Reinert K."/>
            <person name="Remington K."/>
            <person name="Saunders R.D.C."/>
            <person name="Scheeler F."/>
            <person name="Shen H."/>
            <person name="Shue B.C."/>
            <person name="Siden-Kiamos I."/>
            <person name="Simpson M."/>
            <person name="Skupski M.P."/>
            <person name="Smith T.J."/>
            <person name="Spier E."/>
            <person name="Spradling A.C."/>
            <person name="Stapleton M."/>
            <person name="Strong R."/>
            <person name="Sun E."/>
            <person name="Svirskas R."/>
            <person name="Tector C."/>
            <person name="Turner R."/>
            <person name="Venter E."/>
            <person name="Wang A.H."/>
            <person name="Wang X."/>
            <person name="Wang Z.-Y."/>
            <person name="Wassarman D.A."/>
            <person name="Weinstock G.M."/>
            <person name="Weissenbach J."/>
            <person name="Williams S.M."/>
            <person name="Woodage T."/>
            <person name="Worley K.C."/>
            <person name="Wu D."/>
            <person name="Yang S."/>
            <person name="Yao Q.A."/>
            <person name="Ye J."/>
            <person name="Yeh R.-F."/>
            <person name="Zaveri J.S."/>
            <person name="Zhan M."/>
            <person name="Zhang G."/>
            <person name="Zhao Q."/>
            <person name="Zheng L."/>
            <person name="Zheng X.H."/>
            <person name="Zhong F.N."/>
            <person name="Zhong W."/>
            <person name="Zhou X."/>
            <person name="Zhu S.C."/>
            <person name="Zhu X."/>
            <person name="Smith H.O."/>
            <person name="Gibbs R.A."/>
            <person name="Myers E.W."/>
            <person name="Rubin G.M."/>
            <person name="Venter J.C."/>
        </authorList>
    </citation>
    <scope>NUCLEOTIDE SEQUENCE [LARGE SCALE GENOMIC DNA]</scope>
    <source>
        <strain>Berkeley</strain>
    </source>
</reference>
<reference key="5">
    <citation type="journal article" date="2002" name="Genome Biol.">
        <title>Annotation of the Drosophila melanogaster euchromatic genome: a systematic review.</title>
        <authorList>
            <person name="Misra S."/>
            <person name="Crosby M.A."/>
            <person name="Mungall C.J."/>
            <person name="Matthews B.B."/>
            <person name="Campbell K.S."/>
            <person name="Hradecky P."/>
            <person name="Huang Y."/>
            <person name="Kaminker J.S."/>
            <person name="Millburn G.H."/>
            <person name="Prochnik S.E."/>
            <person name="Smith C.D."/>
            <person name="Tupy J.L."/>
            <person name="Whitfield E.J."/>
            <person name="Bayraktaroglu L."/>
            <person name="Berman B.P."/>
            <person name="Bettencourt B.R."/>
            <person name="Celniker S.E."/>
            <person name="de Grey A.D.N.J."/>
            <person name="Drysdale R.A."/>
            <person name="Harris N.L."/>
            <person name="Richter J."/>
            <person name="Russo S."/>
            <person name="Schroeder A.J."/>
            <person name="Shu S.Q."/>
            <person name="Stapleton M."/>
            <person name="Yamada C."/>
            <person name="Ashburner M."/>
            <person name="Gelbart W.M."/>
            <person name="Rubin G.M."/>
            <person name="Lewis S.E."/>
        </authorList>
    </citation>
    <scope>GENOME REANNOTATION</scope>
    <source>
        <strain>Berkeley</strain>
    </source>
</reference>
<reference key="6">
    <citation type="journal article" date="2002" name="Genome Biol.">
        <title>A Drosophila full-length cDNA resource.</title>
        <authorList>
            <person name="Stapleton M."/>
            <person name="Carlson J.W."/>
            <person name="Brokstein P."/>
            <person name="Yu C."/>
            <person name="Champe M."/>
            <person name="George R.A."/>
            <person name="Guarin H."/>
            <person name="Kronmiller B."/>
            <person name="Pacleb J.M."/>
            <person name="Park S."/>
            <person name="Wan K.H."/>
            <person name="Rubin G.M."/>
            <person name="Celniker S.E."/>
        </authorList>
    </citation>
    <scope>NUCLEOTIDE SEQUENCE [LARGE SCALE MRNA] OF 281-672</scope>
    <source>
        <strain>Berkeley</strain>
        <tissue>Embryo</tissue>
    </source>
</reference>
<reference key="7">
    <citation type="journal article" date="2004" name="Mol. Cell. Biol.">
        <title>RanBP2/Nup358 provides a major binding site for NXF1-p15 dimers at the nuclear pore complex and functions in nuclear mRNA export.</title>
        <authorList>
            <person name="Forler D."/>
            <person name="Rabut G."/>
            <person name="Ciccarelli F.D."/>
            <person name="Herold A."/>
            <person name="Koecher T."/>
            <person name="Niggeweg R."/>
            <person name="Bork P."/>
            <person name="Ellenberg J."/>
            <person name="Izaurralde E."/>
        </authorList>
    </citation>
    <scope>IDENTIFICATION IN A COMPLEX WITH NUP358; RANGAP AND NXT1</scope>
    <scope>SUBCELLULAR LOCATION</scope>
</reference>
<reference key="8">
    <citation type="journal article" date="2008" name="J. Proteome Res.">
        <title>Phosphoproteome analysis of Drosophila melanogaster embryos.</title>
        <authorList>
            <person name="Zhai B."/>
            <person name="Villen J."/>
            <person name="Beausoleil S.A."/>
            <person name="Mintseris J."/>
            <person name="Gygi S.P."/>
        </authorList>
    </citation>
    <scope>PHOSPHORYLATION [LARGE SCALE ANALYSIS] AT SER-561</scope>
    <scope>IDENTIFICATION BY MASS SPECTROMETRY</scope>
    <source>
        <tissue>Embryo</tissue>
    </source>
</reference>
<reference key="9">
    <citation type="journal article" date="2009" name="J. Cell Biol.">
        <title>A conserved CCCH-type zinc finger protein regulates mRNA nuclear adenylation and export.</title>
        <authorList>
            <person name="Hurt J.A."/>
            <person name="Obar R.A."/>
            <person name="Zhai B."/>
            <person name="Farny N.G."/>
            <person name="Gygi S.P."/>
            <person name="Silver P.A."/>
        </authorList>
    </citation>
    <scope>INTERACTION WITH ZC3H3</scope>
</reference>
<reference key="10">
    <citation type="journal article" date="2016" name="Nucleic Acids Res.">
        <title>ORC interacts with THSC/TREX-2 and its subunits promote Nxf1 association with mRNP and mRNA export in Drosophila.</title>
        <authorList>
            <person name="Kopytova D."/>
            <person name="Popova V."/>
            <person name="Kurshakova M."/>
            <person name="Shidlovskii Y."/>
            <person name="Nabirochkina E."/>
            <person name="Brechalov A."/>
            <person name="Georgiev G."/>
            <person name="Georgieva S."/>
        </authorList>
    </citation>
    <scope>FUNCTION</scope>
    <scope>INTERACTION WITH ORC3 AND HPR1</scope>
</reference>
<reference key="11">
    <citation type="journal article" date="2019" name="Nat. Cell Biol.">
        <title>A Pandas complex adapted for piRNA-guided transcriptional silencing and heterochromatin formation.</title>
        <authorList>
            <person name="Zhao K."/>
            <person name="Cheng S."/>
            <person name="Miao N."/>
            <person name="Xu P."/>
            <person name="Lu X."/>
            <person name="Zhang Y."/>
            <person name="Wang M."/>
            <person name="Ouyang X."/>
            <person name="Yuan X."/>
            <person name="Liu W."/>
            <person name="Lu X."/>
            <person name="Zhou P."/>
            <person name="Gu J."/>
            <person name="Zhang Y."/>
            <person name="Qiu D."/>
            <person name="Jin Z."/>
            <person name="Su C."/>
            <person name="Peng C."/>
            <person name="Wang J.H."/>
            <person name="Dong M.Q."/>
            <person name="Wan Y."/>
            <person name="Ma J."/>
            <person name="Cheng H."/>
            <person name="Huang Y."/>
            <person name="Yu Y."/>
        </authorList>
    </citation>
    <scope>INTERACTION WITH NXT1</scope>
</reference>
<reference key="12">
    <citation type="journal article" date="2021" name="Elife">
        <title>Channel Nuclear Pore Complex subunits are required for transposon silencing in Drosophila.</title>
        <authorList>
            <person name="Munafo M."/>
            <person name="Lawless V.R."/>
            <person name="Passera A."/>
            <person name="MacMillan S."/>
            <person name="Borneloev S."/>
            <person name="Haussmann I.U."/>
            <person name="Soller M."/>
            <person name="Hannon G.J."/>
            <person name="Czech B."/>
        </authorList>
    </citation>
    <scope>FUNCTION</scope>
    <scope>INTERACTION WITH NUP58 AND NUP54</scope>
</reference>
<sequence length="672" mass="76249">MPKRGGGSSQRYNNNVGNGGGRYNAPEDFDDFDVEDRQRRKDRNKRRVSFKPSQCLHNKKDIKLRPEDLRRWDEDDDMSDMTTAVKDRPTSRRRGSPIPRGKFGKLMPNSFGWYQVTLQNAQIYEKETLLSALLAAMSPHVFIPQYWRVERNCVIFFTDDYEAAERIQHLGKNGHLPDGYRLMPRVRSGIPLVAIDDAFKEKMKVTMAKRYNIQTKALDLSRFHADPDLKQVFCPLFRQNVMGAAIDIMCDNIPDLEALNLNDNSISSMEAFKGVEKRLPNLKILYLGDNKIPSLAHLVVLRNLSILELVLKNNPCRSRYKDSQQFISEVRRKFPKLVKLDGETLEPQITFDLSEQGRLLETKASYLCDVAGAEVVRQFLDQYFRIFDSGNRQALLDAYHEKAMLSISMPSASQAGRLNSFWKFNRNLRRLLNGEENRTRNLKYGRLACVSTLDEWPKTQHDRRTFTVDLTIYNTSMMVFTVTGLFKELNDETNNPASMELYDVRHFARTYVVVPQNNGFCIRNETIFITNATHEQVREFKRSQHQPAPGAMPSTSSAVTSPQAGAAAGLQGRLNALGVATGPVAILSGDPLAATAPVNSGSAAISTTAVAPGAQDESTKMQMIEAMSAQSQMNVIWSRKCLEETNWDFNHAAFVFEKLFKENKIPPEAFMK</sequence>
<dbReference type="EMBL" id="AJ251947">
    <property type="protein sequence ID" value="CAB64382.2"/>
    <property type="molecule type" value="mRNA"/>
</dbReference>
<dbReference type="EMBL" id="AJ272389">
    <property type="protein sequence ID" value="CAB75848.1"/>
    <property type="status" value="ALT_INIT"/>
    <property type="molecule type" value="Genomic_DNA"/>
</dbReference>
<dbReference type="EMBL" id="AJ272390">
    <property type="protein sequence ID" value="CAB75849.1"/>
    <property type="status" value="ALT_SEQ"/>
    <property type="molecule type" value="Genomic_DNA"/>
</dbReference>
<dbReference type="EMBL" id="AJ318090">
    <property type="protein sequence ID" value="CAC41645.1"/>
    <property type="molecule type" value="mRNA"/>
</dbReference>
<dbReference type="EMBL" id="AE014298">
    <property type="protein sequence ID" value="AAF47959.3"/>
    <property type="molecule type" value="Genomic_DNA"/>
</dbReference>
<dbReference type="EMBL" id="AY069415">
    <property type="protein sequence ID" value="AAL39560.1"/>
    <property type="status" value="ALT_INIT"/>
    <property type="molecule type" value="mRNA"/>
</dbReference>
<dbReference type="RefSeq" id="NP_524660.1">
    <property type="nucleotide sequence ID" value="NM_079921.3"/>
</dbReference>
<dbReference type="PDB" id="6IHJ">
    <property type="method" value="X-ray"/>
    <property type="resolution" value="2.70 A"/>
    <property type="chains" value="A/C=359-544"/>
</dbReference>
<dbReference type="PDBsum" id="6IHJ"/>
<dbReference type="SMR" id="Q9U1H9"/>
<dbReference type="BioGRID" id="68734">
    <property type="interactions" value="21"/>
</dbReference>
<dbReference type="ComplexPortal" id="CPX-8930">
    <property type="entry name" value="NXF1-NXT1 mRNA nuclear export factor complex"/>
</dbReference>
<dbReference type="DIP" id="DIP-21726N"/>
<dbReference type="FunCoup" id="Q9U1H9">
    <property type="interactions" value="1151"/>
</dbReference>
<dbReference type="IntAct" id="Q9U1H9">
    <property type="interactions" value="5"/>
</dbReference>
<dbReference type="STRING" id="7227.FBpp0073267"/>
<dbReference type="iPTMnet" id="Q9U1H9"/>
<dbReference type="PaxDb" id="7227-FBpp0073267"/>
<dbReference type="EnsemblMetazoa" id="FBtr0073411">
    <property type="protein sequence ID" value="FBpp0073267"/>
    <property type="gene ID" value="FBgn0003321"/>
</dbReference>
<dbReference type="GeneID" id="43944"/>
<dbReference type="KEGG" id="dme:Dmel_CG1664"/>
<dbReference type="AGR" id="FB:FBgn0003321"/>
<dbReference type="CTD" id="43944"/>
<dbReference type="FlyBase" id="FBgn0003321">
    <property type="gene designation" value="sbr"/>
</dbReference>
<dbReference type="VEuPathDB" id="VectorBase:FBgn0003321"/>
<dbReference type="eggNOG" id="KOG3763">
    <property type="taxonomic scope" value="Eukaryota"/>
</dbReference>
<dbReference type="GeneTree" id="ENSGT00390000007539"/>
<dbReference type="HOGENOM" id="CLU_011280_1_1_1"/>
<dbReference type="InParanoid" id="Q9U1H9"/>
<dbReference type="OMA" id="YGGHEAW"/>
<dbReference type="OrthoDB" id="25872at2759"/>
<dbReference type="PhylomeDB" id="Q9U1H9"/>
<dbReference type="Reactome" id="R-DME-159227">
    <property type="pathway name" value="Transport of the SLBP independent Mature mRNA"/>
</dbReference>
<dbReference type="Reactome" id="R-DME-159230">
    <property type="pathway name" value="Transport of the SLBP Dependant Mature mRNA"/>
</dbReference>
<dbReference type="Reactome" id="R-DME-159231">
    <property type="pathway name" value="Transport of Mature mRNA Derived from an Intronless Transcript"/>
</dbReference>
<dbReference type="Reactome" id="R-DME-159236">
    <property type="pathway name" value="Transport of Mature mRNA derived from an Intron-Containing Transcript"/>
</dbReference>
<dbReference type="SignaLink" id="Q9U1H9"/>
<dbReference type="BioGRID-ORCS" id="43944">
    <property type="hits" value="1 hit in 3 CRISPR screens"/>
</dbReference>
<dbReference type="GenomeRNAi" id="43944"/>
<dbReference type="PRO" id="PR:Q9U1H9"/>
<dbReference type="Proteomes" id="UP000000803">
    <property type="component" value="Chromosome X"/>
</dbReference>
<dbReference type="Bgee" id="FBgn0003321">
    <property type="expression patterns" value="Expressed in adult Malpighian tubule stellate cell of main segment in Malpighian tubule and 254 other cell types or tissues"/>
</dbReference>
<dbReference type="ExpressionAtlas" id="Q9U1H9">
    <property type="expression patterns" value="baseline and differential"/>
</dbReference>
<dbReference type="GO" id="GO:0005737">
    <property type="term" value="C:cytoplasm"/>
    <property type="evidence" value="ECO:0007669"/>
    <property type="project" value="UniProtKB-SubCell"/>
</dbReference>
<dbReference type="GO" id="GO:0005635">
    <property type="term" value="C:nuclear envelope"/>
    <property type="evidence" value="ECO:0000314"/>
    <property type="project" value="UniProtKB"/>
</dbReference>
<dbReference type="GO" id="GO:0031965">
    <property type="term" value="C:nuclear membrane"/>
    <property type="evidence" value="ECO:0000314"/>
    <property type="project" value="FlyBase"/>
</dbReference>
<dbReference type="GO" id="GO:0005654">
    <property type="term" value="C:nucleoplasm"/>
    <property type="evidence" value="ECO:0000314"/>
    <property type="project" value="UniProtKB"/>
</dbReference>
<dbReference type="GO" id="GO:0005634">
    <property type="term" value="C:nucleus"/>
    <property type="evidence" value="ECO:0000318"/>
    <property type="project" value="GO_Central"/>
</dbReference>
<dbReference type="GO" id="GO:0043021">
    <property type="term" value="F:ribonucleoprotein complex binding"/>
    <property type="evidence" value="ECO:0000314"/>
    <property type="project" value="UniProtKB"/>
</dbReference>
<dbReference type="GO" id="GO:0003723">
    <property type="term" value="F:RNA binding"/>
    <property type="evidence" value="ECO:0000318"/>
    <property type="project" value="GO_Central"/>
</dbReference>
<dbReference type="GO" id="GO:0006406">
    <property type="term" value="P:mRNA export from nucleus"/>
    <property type="evidence" value="ECO:0000315"/>
    <property type="project" value="FlyBase"/>
</dbReference>
<dbReference type="GO" id="GO:0051168">
    <property type="term" value="P:nuclear export"/>
    <property type="evidence" value="ECO:0000315"/>
    <property type="project" value="FlyBase"/>
</dbReference>
<dbReference type="GO" id="GO:0016973">
    <property type="term" value="P:poly(A)+ mRNA export from nucleus"/>
    <property type="evidence" value="ECO:0000315"/>
    <property type="project" value="FlyBase"/>
</dbReference>
<dbReference type="GO" id="GO:0046833">
    <property type="term" value="P:positive regulation of RNA export from nucleus"/>
    <property type="evidence" value="ECO:0000315"/>
    <property type="project" value="UniProtKB"/>
</dbReference>
<dbReference type="CDD" id="cd00780">
    <property type="entry name" value="NTF2"/>
    <property type="match status" value="1"/>
</dbReference>
<dbReference type="CDD" id="cd14342">
    <property type="entry name" value="UBA_TAP-C"/>
    <property type="match status" value="1"/>
</dbReference>
<dbReference type="FunFam" id="1.10.8.10:FF:000018">
    <property type="entry name" value="Nuclear RNA export factor 1"/>
    <property type="match status" value="1"/>
</dbReference>
<dbReference type="FunFam" id="3.10.450.50:FF:000004">
    <property type="entry name" value="Nuclear RNA export factor 1"/>
    <property type="match status" value="1"/>
</dbReference>
<dbReference type="FunFam" id="3.80.10.10:FF:000384">
    <property type="entry name" value="Nuclear RNA export factor 1"/>
    <property type="match status" value="1"/>
</dbReference>
<dbReference type="Gene3D" id="3.10.450.50">
    <property type="match status" value="1"/>
</dbReference>
<dbReference type="Gene3D" id="3.30.70.330">
    <property type="match status" value="1"/>
</dbReference>
<dbReference type="Gene3D" id="1.10.8.10">
    <property type="entry name" value="DNA helicase RuvA subunit, C-terminal domain"/>
    <property type="match status" value="1"/>
</dbReference>
<dbReference type="Gene3D" id="3.80.10.10">
    <property type="entry name" value="Ribonuclease Inhibitor"/>
    <property type="match status" value="1"/>
</dbReference>
<dbReference type="InterPro" id="IPR001611">
    <property type="entry name" value="Leu-rich_rpt"/>
</dbReference>
<dbReference type="InterPro" id="IPR032675">
    <property type="entry name" value="LRR_dom_sf"/>
</dbReference>
<dbReference type="InterPro" id="IPR032710">
    <property type="entry name" value="NTF2-like_dom_sf"/>
</dbReference>
<dbReference type="InterPro" id="IPR002075">
    <property type="entry name" value="NTF2_dom"/>
</dbReference>
<dbReference type="InterPro" id="IPR018222">
    <property type="entry name" value="Nuclear_transport_factor_2_euk"/>
</dbReference>
<dbReference type="InterPro" id="IPR012677">
    <property type="entry name" value="Nucleotide-bd_a/b_plait_sf"/>
</dbReference>
<dbReference type="InterPro" id="IPR030217">
    <property type="entry name" value="NXF_fam"/>
</dbReference>
<dbReference type="InterPro" id="IPR035979">
    <property type="entry name" value="RBD_domain_sf"/>
</dbReference>
<dbReference type="InterPro" id="IPR005637">
    <property type="entry name" value="TAP_C_dom"/>
</dbReference>
<dbReference type="InterPro" id="IPR015245">
    <property type="entry name" value="Tap_RNA-bd"/>
</dbReference>
<dbReference type="InterPro" id="IPR009060">
    <property type="entry name" value="UBA-like_sf"/>
</dbReference>
<dbReference type="PANTHER" id="PTHR10662">
    <property type="entry name" value="NUCLEAR RNA EXPORT FACTOR"/>
    <property type="match status" value="1"/>
</dbReference>
<dbReference type="PANTHER" id="PTHR10662:SF22">
    <property type="entry name" value="NUCLEAR RNA EXPORT FACTOR 1"/>
    <property type="match status" value="1"/>
</dbReference>
<dbReference type="Pfam" id="PF24048">
    <property type="entry name" value="LRR_NXF1-5"/>
    <property type="match status" value="1"/>
</dbReference>
<dbReference type="Pfam" id="PF22602">
    <property type="entry name" value="NXF_NTF2"/>
    <property type="match status" value="1"/>
</dbReference>
<dbReference type="Pfam" id="PF09162">
    <property type="entry name" value="Tap-RNA_bind"/>
    <property type="match status" value="1"/>
</dbReference>
<dbReference type="Pfam" id="PF03943">
    <property type="entry name" value="TAP_C"/>
    <property type="match status" value="1"/>
</dbReference>
<dbReference type="SMART" id="SM00804">
    <property type="entry name" value="TAP_C"/>
    <property type="match status" value="1"/>
</dbReference>
<dbReference type="SUPFAM" id="SSF52058">
    <property type="entry name" value="L domain-like"/>
    <property type="match status" value="1"/>
</dbReference>
<dbReference type="SUPFAM" id="SSF54427">
    <property type="entry name" value="NTF2-like"/>
    <property type="match status" value="1"/>
</dbReference>
<dbReference type="SUPFAM" id="SSF54928">
    <property type="entry name" value="RNA-binding domain, RBD"/>
    <property type="match status" value="1"/>
</dbReference>
<dbReference type="SUPFAM" id="SSF46934">
    <property type="entry name" value="UBA-like"/>
    <property type="match status" value="1"/>
</dbReference>
<dbReference type="PROSITE" id="PS51450">
    <property type="entry name" value="LRR"/>
    <property type="match status" value="2"/>
</dbReference>
<dbReference type="PROSITE" id="PS50177">
    <property type="entry name" value="NTF2_DOMAIN"/>
    <property type="match status" value="1"/>
</dbReference>
<dbReference type="PROSITE" id="PS51281">
    <property type="entry name" value="TAP_C"/>
    <property type="match status" value="1"/>
</dbReference>
<feature type="chain" id="PRO_0000220538" description="Nuclear RNA export factor 1">
    <location>
        <begin position="1"/>
        <end position="672"/>
    </location>
</feature>
<feature type="domain" description="RRM">
    <location>
        <begin position="113"/>
        <end position="193"/>
    </location>
</feature>
<feature type="repeat" description="LRR 1">
    <location>
        <begin position="255"/>
        <end position="280"/>
    </location>
</feature>
<feature type="repeat" description="LRR 2">
    <location>
        <begin position="281"/>
        <end position="304"/>
    </location>
</feature>
<feature type="repeat" description="LRR 3">
    <location>
        <begin position="305"/>
        <end position="332"/>
    </location>
</feature>
<feature type="repeat" description="LRR 4">
    <location>
        <begin position="333"/>
        <end position="360"/>
    </location>
</feature>
<feature type="domain" description="NTF2" evidence="1">
    <location>
        <begin position="375"/>
        <end position="529"/>
    </location>
</feature>
<feature type="domain" description="TAP-C" evidence="2">
    <location>
        <begin position="618"/>
        <end position="672"/>
    </location>
</feature>
<feature type="region of interest" description="Disordered" evidence="3">
    <location>
        <begin position="1"/>
        <end position="52"/>
    </location>
</feature>
<feature type="region of interest" description="Disordered" evidence="3">
    <location>
        <begin position="73"/>
        <end position="101"/>
    </location>
</feature>
<feature type="region of interest" description="Disordered" evidence="3">
    <location>
        <begin position="541"/>
        <end position="564"/>
    </location>
</feature>
<feature type="compositionally biased region" description="Basic residues" evidence="3">
    <location>
        <begin position="40"/>
        <end position="49"/>
    </location>
</feature>
<feature type="compositionally biased region" description="Polar residues" evidence="3">
    <location>
        <begin position="553"/>
        <end position="563"/>
    </location>
</feature>
<feature type="modified residue" description="Phosphoserine" evidence="8">
    <location>
        <position position="561"/>
    </location>
</feature>
<feature type="sequence conflict" description="In Ref. 2; CAB75848." evidence="15" ref="2">
    <original>I</original>
    <variation>V</variation>
    <location>
        <position position="292"/>
    </location>
</feature>
<feature type="sequence conflict" description="In Ref. 2; CAB75849." evidence="15" ref="2">
    <original>K</original>
    <variation>KR</variation>
    <location>
        <position position="640"/>
    </location>
</feature>
<feature type="strand" evidence="18">
    <location>
        <begin position="364"/>
        <end position="369"/>
    </location>
</feature>
<feature type="helix" evidence="18">
    <location>
        <begin position="370"/>
        <end position="372"/>
    </location>
</feature>
<feature type="helix" evidence="18">
    <location>
        <begin position="373"/>
        <end position="388"/>
    </location>
</feature>
<feature type="helix" evidence="18">
    <location>
        <begin position="392"/>
        <end position="396"/>
    </location>
</feature>
<feature type="strand" evidence="18">
    <location>
        <begin position="399"/>
        <end position="408"/>
    </location>
</feature>
<feature type="turn" evidence="18">
    <location>
        <begin position="412"/>
        <end position="414"/>
    </location>
</feature>
<feature type="turn" evidence="18">
    <location>
        <begin position="419"/>
        <end position="421"/>
    </location>
</feature>
<feature type="helix" evidence="18">
    <location>
        <begin position="422"/>
        <end position="424"/>
    </location>
</feature>
<feature type="turn" evidence="18">
    <location>
        <begin position="438"/>
        <end position="441"/>
    </location>
</feature>
<feature type="strand" evidence="18">
    <location>
        <begin position="443"/>
        <end position="445"/>
    </location>
</feature>
<feature type="helix" evidence="18">
    <location>
        <begin position="446"/>
        <end position="454"/>
    </location>
</feature>
<feature type="strand" evidence="18">
    <location>
        <begin position="459"/>
        <end position="461"/>
    </location>
</feature>
<feature type="helix" evidence="18">
    <location>
        <begin position="463"/>
        <end position="465"/>
    </location>
</feature>
<feature type="strand" evidence="18">
    <location>
        <begin position="467"/>
        <end position="473"/>
    </location>
</feature>
<feature type="strand" evidence="18">
    <location>
        <begin position="478"/>
        <end position="488"/>
    </location>
</feature>
<feature type="helix" evidence="18">
    <location>
        <begin position="491"/>
        <end position="494"/>
    </location>
</feature>
<feature type="strand" evidence="18">
    <location>
        <begin position="504"/>
        <end position="515"/>
    </location>
</feature>
<feature type="strand" evidence="18">
    <location>
        <begin position="517"/>
        <end position="531"/>
    </location>
</feature>
<feature type="helix" evidence="18">
    <location>
        <begin position="534"/>
        <end position="541"/>
    </location>
</feature>
<keyword id="KW-0002">3D-structure</keyword>
<keyword id="KW-0963">Cytoplasm</keyword>
<keyword id="KW-0433">Leucine-rich repeat</keyword>
<keyword id="KW-0509">mRNA transport</keyword>
<keyword id="KW-0539">Nucleus</keyword>
<keyword id="KW-0597">Phosphoprotein</keyword>
<keyword id="KW-1185">Reference proteome</keyword>
<keyword id="KW-0677">Repeat</keyword>
<keyword id="KW-0694">RNA-binding</keyword>
<keyword id="KW-0813">Transport</keyword>
<gene>
    <name evidence="14 17" type="primary">sbr</name>
    <name evidence="13" type="synonym">nxf1</name>
    <name evidence="17" type="ORF">CG1664</name>
</gene>
<comment type="function">
    <text evidence="4 5 6 10 12">Mediates the export of the majority of mRNAs from the nucleus to the cytoplasm (PubMed:11779805, PubMed:11780633, PubMed:11780634, PubMed:27016737). In ovarian follicle cells, plays a role in transposable element silencing regulation by enabling the nuclear export of flamenco (flam) transcripts and subsequent piRNA biogenesis (PubMed:33856346).</text>
</comment>
<comment type="subunit">
    <text evidence="5 7 9 10 11 12">Interacts with Nxt1 (PubMed:11780633, PubMed:31570835). Interacts with ZC3H3 (PubMed:19364924). Forms a complex with Nup358/RanBP2, RanGAP and Nxt1 (PubMed:14729961). Interacts with Nup54 and Nup58 (PubMed:33856346). Interacts with Orc3 and Hpr1 (PubMed:27016737).</text>
</comment>
<comment type="subcellular location">
    <subcellularLocation>
        <location evidence="7">Nucleus</location>
        <location evidence="7">Nucleoplasm</location>
    </subcellularLocation>
    <subcellularLocation>
        <location evidence="7">Cytoplasm</location>
    </subcellularLocation>
    <subcellularLocation>
        <location evidence="7">Nucleus envelope</location>
    </subcellularLocation>
    <text evidence="7">Localized in the nucleoplasm and at both the nucleoplasmic and cytoplasmic faces of the nuclear pore complex. Shuttles between the nucleus and the cytoplasm.</text>
</comment>
<comment type="tissue specificity">
    <text>Expressed ubiquitously.</text>
</comment>
<comment type="developmental stage">
    <text evidence="4">Expressed both maternally and zygotically. Expressed throughout embryonic development.</text>
</comment>
<comment type="domain">
    <text>The leucine-rich repeats and the NTF2-domain are essential for the export of mRNA from the nucleus.</text>
</comment>
<comment type="domain">
    <text>The C-terminal fragment, containing the TAP domain (also called UBA-like domain) and part of the NTF2-like domain, named the NPC-binding domain, mediates direct interactions with nucleoporin-FG-repeats and is necessary and sufficient for localization of NXF1 to the nuclear rim.</text>
</comment>
<comment type="domain">
    <text>The RNA-binding domain is a non-canonical RNP-type domain.</text>
</comment>
<comment type="miscellaneous">
    <text>Mutations affect the morphogenesis of embryonic neurons, embryonic muscle and adult sensory bristles. This is thought to be due to reduced rate of protein synthesis as the mRNA is not efficiently being exported out of the nucleus.</text>
</comment>
<comment type="similarity">
    <text evidence="15">Belongs to the NXF family.</text>
</comment>
<comment type="sequence caution" evidence="15">
    <conflict type="erroneous initiation">
        <sequence resource="EMBL-CDS" id="AAL39560"/>
    </conflict>
</comment>
<comment type="sequence caution" evidence="15">
    <conflict type="erroneous initiation">
        <sequence resource="EMBL-CDS" id="CAB75848"/>
    </conflict>
</comment>
<evidence type="ECO:0000255" key="1">
    <source>
        <dbReference type="PROSITE-ProRule" id="PRU00137"/>
    </source>
</evidence>
<evidence type="ECO:0000255" key="2">
    <source>
        <dbReference type="PROSITE-ProRule" id="PRU00611"/>
    </source>
</evidence>
<evidence type="ECO:0000256" key="3">
    <source>
        <dbReference type="SAM" id="MobiDB-lite"/>
    </source>
</evidence>
<evidence type="ECO:0000269" key="4">
    <source>
    </source>
</evidence>
<evidence type="ECO:0000269" key="5">
    <source>
    </source>
</evidence>
<evidence type="ECO:0000269" key="6">
    <source>
    </source>
</evidence>
<evidence type="ECO:0000269" key="7">
    <source>
    </source>
</evidence>
<evidence type="ECO:0000269" key="8">
    <source>
    </source>
</evidence>
<evidence type="ECO:0000269" key="9">
    <source>
    </source>
</evidence>
<evidence type="ECO:0000269" key="10">
    <source>
    </source>
</evidence>
<evidence type="ECO:0000269" key="11">
    <source>
    </source>
</evidence>
<evidence type="ECO:0000269" key="12">
    <source>
    </source>
</evidence>
<evidence type="ECO:0000303" key="13">
    <source>
    </source>
</evidence>
<evidence type="ECO:0000303" key="14">
    <source>
    </source>
</evidence>
<evidence type="ECO:0000305" key="15"/>
<evidence type="ECO:0000305" key="16">
    <source>
    </source>
</evidence>
<evidence type="ECO:0000312" key="17">
    <source>
        <dbReference type="FlyBase" id="FBgn0003321"/>
    </source>
</evidence>
<evidence type="ECO:0007829" key="18">
    <source>
        <dbReference type="PDB" id="6IHJ"/>
    </source>
</evidence>
<proteinExistence type="evidence at protein level"/>
<accession>Q9U1H9</accession>
<accession>Q9NFQ2</accession>
<accession>Q9NFQ3</accession>
<accession>Q9VZ65</accession>
<accession>Q9VZ68</accession>
<organism>
    <name type="scientific">Drosophila melanogaster</name>
    <name type="common">Fruit fly</name>
    <dbReference type="NCBI Taxonomy" id="7227"/>
    <lineage>
        <taxon>Eukaryota</taxon>
        <taxon>Metazoa</taxon>
        <taxon>Ecdysozoa</taxon>
        <taxon>Arthropoda</taxon>
        <taxon>Hexapoda</taxon>
        <taxon>Insecta</taxon>
        <taxon>Pterygota</taxon>
        <taxon>Neoptera</taxon>
        <taxon>Endopterygota</taxon>
        <taxon>Diptera</taxon>
        <taxon>Brachycera</taxon>
        <taxon>Muscomorpha</taxon>
        <taxon>Ephydroidea</taxon>
        <taxon>Drosophilidae</taxon>
        <taxon>Drosophila</taxon>
        <taxon>Sophophora</taxon>
    </lineage>
</organism>